<evidence type="ECO:0000255" key="1">
    <source>
        <dbReference type="HAMAP-Rule" id="MF_00433"/>
    </source>
</evidence>
<reference key="1">
    <citation type="submission" date="2007-03" db="EMBL/GenBank/DDBJ databases">
        <title>Sequencing analysis of Aethionema grandiflorum chloroplast DNA.</title>
        <authorList>
            <person name="Hosouchi T."/>
            <person name="Tsuruoka H."/>
            <person name="Kotani H."/>
        </authorList>
    </citation>
    <scope>NUCLEOTIDE SEQUENCE [LARGE SCALE GENOMIC DNA]</scope>
</reference>
<organism>
    <name type="scientific">Aethionema grandiflorum</name>
    <name type="common">Persian stone-cress</name>
    <dbReference type="NCBI Taxonomy" id="72657"/>
    <lineage>
        <taxon>Eukaryota</taxon>
        <taxon>Viridiplantae</taxon>
        <taxon>Streptophyta</taxon>
        <taxon>Embryophyta</taxon>
        <taxon>Tracheophyta</taxon>
        <taxon>Spermatophyta</taxon>
        <taxon>Magnoliopsida</taxon>
        <taxon>eudicotyledons</taxon>
        <taxon>Gunneridae</taxon>
        <taxon>Pentapetalae</taxon>
        <taxon>rosids</taxon>
        <taxon>malvids</taxon>
        <taxon>Brassicales</taxon>
        <taxon>Brassicaceae</taxon>
        <taxon>Aethionemeae</taxon>
        <taxon>Aethionema</taxon>
    </lineage>
</organism>
<feature type="chain" id="PRO_0000300132" description="Cytochrome b6-f complex subunit 6">
    <location>
        <begin position="1"/>
        <end position="31"/>
    </location>
</feature>
<feature type="transmembrane region" description="Helical" evidence="1">
    <location>
        <begin position="4"/>
        <end position="26"/>
    </location>
</feature>
<dbReference type="EMBL" id="AP009367">
    <property type="protein sequence ID" value="BAF49872.1"/>
    <property type="molecule type" value="Genomic_DNA"/>
</dbReference>
<dbReference type="RefSeq" id="YP_001123048.1">
    <property type="nucleotide sequence ID" value="NC_009266.1"/>
</dbReference>
<dbReference type="SMR" id="A4QJL7"/>
<dbReference type="GeneID" id="4962299"/>
<dbReference type="GO" id="GO:0009535">
    <property type="term" value="C:chloroplast thylakoid membrane"/>
    <property type="evidence" value="ECO:0007669"/>
    <property type="project" value="UniProtKB-SubCell"/>
</dbReference>
<dbReference type="GO" id="GO:0009512">
    <property type="term" value="C:cytochrome b6f complex"/>
    <property type="evidence" value="ECO:0007669"/>
    <property type="project" value="InterPro"/>
</dbReference>
<dbReference type="GO" id="GO:0045158">
    <property type="term" value="F:electron transporter, transferring electrons within cytochrome b6/f complex of photosystem II activity"/>
    <property type="evidence" value="ECO:0007669"/>
    <property type="project" value="UniProtKB-UniRule"/>
</dbReference>
<dbReference type="GO" id="GO:0015979">
    <property type="term" value="P:photosynthesis"/>
    <property type="evidence" value="ECO:0007669"/>
    <property type="project" value="UniProtKB-KW"/>
</dbReference>
<dbReference type="HAMAP" id="MF_00433">
    <property type="entry name" value="Cytb6_f_PetL"/>
    <property type="match status" value="1"/>
</dbReference>
<dbReference type="InterPro" id="IPR007802">
    <property type="entry name" value="Cyt_b6/f_cplx_su6"/>
</dbReference>
<dbReference type="PANTHER" id="PTHR37266">
    <property type="entry name" value="CYTOCHROME B6-F COMPLEX SUBUNIT 6"/>
    <property type="match status" value="1"/>
</dbReference>
<dbReference type="PANTHER" id="PTHR37266:SF1">
    <property type="entry name" value="CYTOCHROME B6-F COMPLEX SUBUNIT 6"/>
    <property type="match status" value="1"/>
</dbReference>
<dbReference type="Pfam" id="PF05115">
    <property type="entry name" value="PetL"/>
    <property type="match status" value="1"/>
</dbReference>
<dbReference type="SUPFAM" id="SSF103436">
    <property type="entry name" value="PetL subunit of the cytochrome b6f complex"/>
    <property type="match status" value="1"/>
</dbReference>
<keyword id="KW-0150">Chloroplast</keyword>
<keyword id="KW-0249">Electron transport</keyword>
<keyword id="KW-0472">Membrane</keyword>
<keyword id="KW-0602">Photosynthesis</keyword>
<keyword id="KW-0934">Plastid</keyword>
<keyword id="KW-0793">Thylakoid</keyword>
<keyword id="KW-0812">Transmembrane</keyword>
<keyword id="KW-1133">Transmembrane helix</keyword>
<keyword id="KW-0813">Transport</keyword>
<protein>
    <recommendedName>
        <fullName evidence="1">Cytochrome b6-f complex subunit 6</fullName>
    </recommendedName>
    <alternativeName>
        <fullName evidence="1">Cytochrome b6-f complex subunit PetL</fullName>
    </alternativeName>
    <alternativeName>
        <fullName evidence="1">Cytochrome b6-f complex subunit VI</fullName>
    </alternativeName>
</protein>
<gene>
    <name evidence="1" type="primary">petL</name>
</gene>
<sequence>MLTLTSYFGFLLAALTITSALFIGLSKIRLI</sequence>
<name>PETL_AETGR</name>
<comment type="function">
    <text evidence="1">Component of the cytochrome b6-f complex, which mediates electron transfer between photosystem II (PSII) and photosystem I (PSI), cyclic electron flow around PSI, and state transitions. PetL is important for photoautotrophic growth as well as for electron transfer efficiency and stability of the cytochrome b6-f complex.</text>
</comment>
<comment type="subunit">
    <text evidence="1">The 4 large subunits of the cytochrome b6-f complex are cytochrome b6, subunit IV (17 kDa polypeptide, PetD), cytochrome f and the Rieske protein, while the 4 small subunits are PetG, PetL, PetM and PetN. The complex functions as a dimer.</text>
</comment>
<comment type="subcellular location">
    <subcellularLocation>
        <location evidence="1">Plastid</location>
        <location evidence="1">Chloroplast thylakoid membrane</location>
        <topology evidence="1">Single-pass membrane protein</topology>
    </subcellularLocation>
</comment>
<comment type="similarity">
    <text evidence="1">Belongs to the PetL family.</text>
</comment>
<geneLocation type="chloroplast"/>
<proteinExistence type="inferred from homology"/>
<accession>A4QJL7</accession>